<accession>Q2UXV8</accession>
<feature type="signal peptide" evidence="2">
    <location>
        <begin position="1"/>
        <end position="22"/>
    </location>
</feature>
<feature type="propeptide" id="PRO_0000268207" evidence="1">
    <location>
        <begin position="23"/>
        <end position="45"/>
    </location>
</feature>
<feature type="peptide" id="PRO_0000268208" description="Brevinin-1V">
    <location>
        <begin position="48"/>
        <end position="71"/>
    </location>
</feature>
<feature type="disulfide bond" evidence="1">
    <location>
        <begin position="65"/>
        <end position="71"/>
    </location>
</feature>
<organism>
    <name type="scientific">Odorrana versabilis</name>
    <name type="common">Chinese bamboo leaf odorous frog</name>
    <name type="synonym">Rana versabilis</name>
    <dbReference type="NCBI Taxonomy" id="326940"/>
    <lineage>
        <taxon>Eukaryota</taxon>
        <taxon>Metazoa</taxon>
        <taxon>Chordata</taxon>
        <taxon>Craniata</taxon>
        <taxon>Vertebrata</taxon>
        <taxon>Euteleostomi</taxon>
        <taxon>Amphibia</taxon>
        <taxon>Batrachia</taxon>
        <taxon>Anura</taxon>
        <taxon>Neobatrachia</taxon>
        <taxon>Ranoidea</taxon>
        <taxon>Ranidae</taxon>
        <taxon>Odorrana</taxon>
    </lineage>
</organism>
<name>BR1_ODOVE</name>
<protein>
    <recommendedName>
        <fullName>Brevinin-1V</fullName>
    </recommendedName>
</protein>
<evidence type="ECO:0000250" key="1"/>
<evidence type="ECO:0000255" key="2"/>
<evidence type="ECO:0000305" key="3"/>
<proteinExistence type="evidence at transcript level"/>
<dbReference type="EMBL" id="AJ971791">
    <property type="protein sequence ID" value="CAI96774.1"/>
    <property type="molecule type" value="mRNA"/>
</dbReference>
<dbReference type="GO" id="GO:0005576">
    <property type="term" value="C:extracellular region"/>
    <property type="evidence" value="ECO:0000250"/>
    <property type="project" value="UniProtKB"/>
</dbReference>
<dbReference type="GO" id="GO:0050829">
    <property type="term" value="P:defense response to Gram-negative bacterium"/>
    <property type="evidence" value="ECO:0000250"/>
    <property type="project" value="UniProtKB"/>
</dbReference>
<dbReference type="GO" id="GO:0050830">
    <property type="term" value="P:defense response to Gram-positive bacterium"/>
    <property type="evidence" value="ECO:0000250"/>
    <property type="project" value="UniProtKB"/>
</dbReference>
<dbReference type="GO" id="GO:0044179">
    <property type="term" value="P:hemolysis in another organism"/>
    <property type="evidence" value="ECO:0000250"/>
    <property type="project" value="UniProtKB"/>
</dbReference>
<dbReference type="InterPro" id="IPR012520">
    <property type="entry name" value="Antimicrobial_frog_1"/>
</dbReference>
<dbReference type="InterPro" id="IPR004275">
    <property type="entry name" value="Frog_antimicrobial_propeptide"/>
</dbReference>
<dbReference type="Pfam" id="PF08018">
    <property type="entry name" value="Antimicrobial_1"/>
    <property type="match status" value="1"/>
</dbReference>
<dbReference type="Pfam" id="PF03032">
    <property type="entry name" value="FSAP_sig_propep"/>
    <property type="match status" value="1"/>
</dbReference>
<reference key="1">
    <citation type="journal article" date="2006" name="Peptides">
        <title>Amphibian skin peptides and their corresponding cDNAs from singlelyophilized secretion samples: identification of novel brevinins fromthree species of Chinese frogs.</title>
        <authorList>
            <person name="Chen T."/>
            <person name="Li L."/>
            <person name="Zhou M."/>
            <person name="Rao P."/>
            <person name="Walker B."/>
            <person name="Shaw C."/>
        </authorList>
    </citation>
    <scope>NUCLEOTIDE SEQUENCE [MRNA]</scope>
    <source>
        <tissue>Skin</tissue>
    </source>
</reference>
<comment type="function">
    <text evidence="1">Antimicrobial peptide.</text>
</comment>
<comment type="subcellular location">
    <subcellularLocation>
        <location>Secreted</location>
    </subcellularLocation>
</comment>
<comment type="tissue specificity">
    <text>Expressed by the skin glands.</text>
</comment>
<comment type="similarity">
    <text evidence="3">Belongs to the frog skin active peptide (FSAP) family. Brevinin subfamily.</text>
</comment>
<sequence length="71" mass="8262">MFTLKKSLLLLFFLGTINLSLCEQERDADEEERRDDSEERDIEVEKRFLPLIASVAANLVPKIFCKITKKC</sequence>
<keyword id="KW-0878">Amphibian defense peptide</keyword>
<keyword id="KW-0044">Antibiotic</keyword>
<keyword id="KW-0929">Antimicrobial</keyword>
<keyword id="KW-0165">Cleavage on pair of basic residues</keyword>
<keyword id="KW-1015">Disulfide bond</keyword>
<keyword id="KW-0964">Secreted</keyword>
<keyword id="KW-0732">Signal</keyword>